<keyword id="KW-0028">Amino-acid biosynthesis</keyword>
<keyword id="KW-0057">Aromatic amino acid biosynthesis</keyword>
<keyword id="KW-0456">Lyase</keyword>
<keyword id="KW-1185">Reference proteome</keyword>
<protein>
    <recommendedName>
        <fullName>Chorismate synthase</fullName>
        <ecNumber>4.2.3.5</ecNumber>
    </recommendedName>
    <alternativeName>
        <fullName>5-enolpyruvylshikimate-3-phosphate phospholyase</fullName>
    </alternativeName>
</protein>
<comment type="catalytic activity">
    <reaction>
        <text>5-O-(1-carboxyvinyl)-3-phosphoshikimate = chorismate + phosphate</text>
        <dbReference type="Rhea" id="RHEA:21020"/>
        <dbReference type="ChEBI" id="CHEBI:29748"/>
        <dbReference type="ChEBI" id="CHEBI:43474"/>
        <dbReference type="ChEBI" id="CHEBI:57701"/>
        <dbReference type="EC" id="4.2.3.5"/>
    </reaction>
</comment>
<comment type="cofactor">
    <cofactor evidence="1">
        <name>FMNH2</name>
        <dbReference type="ChEBI" id="CHEBI:57618"/>
    </cofactor>
</comment>
<comment type="pathway">
    <text>Metabolic intermediate biosynthesis; chorismate biosynthesis; chorismate from D-erythrose 4-phosphate and phosphoenolpyruvate: step 7/7.</text>
</comment>
<comment type="subunit">
    <text evidence="1">Homotetramer.</text>
</comment>
<comment type="similarity">
    <text evidence="2">Belongs to the chorismate synthase family.</text>
</comment>
<evidence type="ECO:0000250" key="1"/>
<evidence type="ECO:0000305" key="2"/>
<accession>O74413</accession>
<accession>Q9Y7Q4</accession>
<name>AROC_SCHPO</name>
<proteinExistence type="inferred from homology"/>
<sequence length="395" mass="42325">MSSFGTLFKVTTYGESHCKSVGCIVEGCPPGMNLTESDVQVQLTRRRPGQSNLTTPRNEKDKVQIQSGTEFGVTLGTPIGMLVLNQDQKPHDYSDMDNYPRPSHADYTYLEKYGVKASSGGGRSSARETIGRVAAGAIAEKYLLEAYGVEIVAFVSSVGKIAIPLHETASSAILDPEDDTFESPITAEYLKFLNKITREEVDKTTVRCPHAATAAKMAERITRARDNHDSIGGTVTCVIRNVPTGLGEPCFDKLEAKLAHAMMSIPATKSFEIGSGREGCKVAGSKHNDLFYRNADTGKLGTLTNNSGGVQGGISNGENVYFTIGFKSPATIGVEQSTSRYDGSDGVLAAKGRHDPCVVPRAIPIVEAMAALVVMDAVMIQQSRIASRNLLPNAQ</sequence>
<dbReference type="EC" id="4.2.3.5"/>
<dbReference type="EMBL" id="CU329672">
    <property type="protein sequence ID" value="CAA20883.2"/>
    <property type="molecule type" value="Genomic_DNA"/>
</dbReference>
<dbReference type="PIR" id="T41268">
    <property type="entry name" value="T41268"/>
</dbReference>
<dbReference type="RefSeq" id="NP_588359.2">
    <property type="nucleotide sequence ID" value="NM_001023350.2"/>
</dbReference>
<dbReference type="SMR" id="O74413"/>
<dbReference type="FunCoup" id="O74413">
    <property type="interactions" value="349"/>
</dbReference>
<dbReference type="STRING" id="284812.O74413"/>
<dbReference type="iPTMnet" id="O74413"/>
<dbReference type="PaxDb" id="4896-SPCC1223.14.1"/>
<dbReference type="EnsemblFungi" id="SPCC1223.14.1">
    <property type="protein sequence ID" value="SPCC1223.14.1:pep"/>
    <property type="gene ID" value="SPCC1223.14"/>
</dbReference>
<dbReference type="GeneID" id="2538817"/>
<dbReference type="KEGG" id="spo:2538817"/>
<dbReference type="PomBase" id="SPCC1223.14"/>
<dbReference type="VEuPathDB" id="FungiDB:SPCC1223.14"/>
<dbReference type="eggNOG" id="KOG4492">
    <property type="taxonomic scope" value="Eukaryota"/>
</dbReference>
<dbReference type="HOGENOM" id="CLU_034547_0_1_1"/>
<dbReference type="InParanoid" id="O74413"/>
<dbReference type="OMA" id="MLSINAV"/>
<dbReference type="PhylomeDB" id="O74413"/>
<dbReference type="UniPathway" id="UPA00053">
    <property type="reaction ID" value="UER00090"/>
</dbReference>
<dbReference type="PRO" id="PR:O74413"/>
<dbReference type="Proteomes" id="UP000002485">
    <property type="component" value="Chromosome III"/>
</dbReference>
<dbReference type="GO" id="GO:0005829">
    <property type="term" value="C:cytosol"/>
    <property type="evidence" value="ECO:0007005"/>
    <property type="project" value="PomBase"/>
</dbReference>
<dbReference type="GO" id="GO:0005634">
    <property type="term" value="C:nucleus"/>
    <property type="evidence" value="ECO:0007005"/>
    <property type="project" value="PomBase"/>
</dbReference>
<dbReference type="GO" id="GO:0004107">
    <property type="term" value="F:chorismate synthase activity"/>
    <property type="evidence" value="ECO:0000318"/>
    <property type="project" value="GO_Central"/>
</dbReference>
<dbReference type="GO" id="GO:0010181">
    <property type="term" value="F:FMN binding"/>
    <property type="evidence" value="ECO:0000318"/>
    <property type="project" value="GO_Central"/>
</dbReference>
<dbReference type="GO" id="GO:0008652">
    <property type="term" value="P:amino acid biosynthetic process"/>
    <property type="evidence" value="ECO:0007669"/>
    <property type="project" value="UniProtKB-KW"/>
</dbReference>
<dbReference type="GO" id="GO:0009073">
    <property type="term" value="P:aromatic amino acid family biosynthetic process"/>
    <property type="evidence" value="ECO:0000318"/>
    <property type="project" value="GO_Central"/>
</dbReference>
<dbReference type="GO" id="GO:0009423">
    <property type="term" value="P:chorismate biosynthetic process"/>
    <property type="evidence" value="ECO:0000318"/>
    <property type="project" value="GO_Central"/>
</dbReference>
<dbReference type="CDD" id="cd07304">
    <property type="entry name" value="Chorismate_synthase"/>
    <property type="match status" value="1"/>
</dbReference>
<dbReference type="FunFam" id="3.60.150.10:FF:000004">
    <property type="entry name" value="Chorismate synthase"/>
    <property type="match status" value="1"/>
</dbReference>
<dbReference type="Gene3D" id="3.60.150.10">
    <property type="entry name" value="Chorismate synthase AroC"/>
    <property type="match status" value="1"/>
</dbReference>
<dbReference type="HAMAP" id="MF_00300">
    <property type="entry name" value="Chorismate_synth"/>
    <property type="match status" value="1"/>
</dbReference>
<dbReference type="InterPro" id="IPR000453">
    <property type="entry name" value="Chorismate_synth"/>
</dbReference>
<dbReference type="InterPro" id="IPR035904">
    <property type="entry name" value="Chorismate_synth_AroC_sf"/>
</dbReference>
<dbReference type="InterPro" id="IPR020541">
    <property type="entry name" value="Chorismate_synthase_CS"/>
</dbReference>
<dbReference type="NCBIfam" id="TIGR00033">
    <property type="entry name" value="aroC"/>
    <property type="match status" value="1"/>
</dbReference>
<dbReference type="NCBIfam" id="NF003793">
    <property type="entry name" value="PRK05382.1"/>
    <property type="match status" value="1"/>
</dbReference>
<dbReference type="PANTHER" id="PTHR21085">
    <property type="entry name" value="CHORISMATE SYNTHASE"/>
    <property type="match status" value="1"/>
</dbReference>
<dbReference type="PANTHER" id="PTHR21085:SF0">
    <property type="entry name" value="CHORISMATE SYNTHASE"/>
    <property type="match status" value="1"/>
</dbReference>
<dbReference type="Pfam" id="PF01264">
    <property type="entry name" value="Chorismate_synt"/>
    <property type="match status" value="1"/>
</dbReference>
<dbReference type="PIRSF" id="PIRSF001456">
    <property type="entry name" value="Chorismate_synth"/>
    <property type="match status" value="1"/>
</dbReference>
<dbReference type="SUPFAM" id="SSF103263">
    <property type="entry name" value="Chorismate synthase, AroC"/>
    <property type="match status" value="1"/>
</dbReference>
<dbReference type="PROSITE" id="PS00787">
    <property type="entry name" value="CHORISMATE_SYNTHASE_1"/>
    <property type="match status" value="1"/>
</dbReference>
<dbReference type="PROSITE" id="PS00788">
    <property type="entry name" value="CHORISMATE_SYNTHASE_2"/>
    <property type="match status" value="1"/>
</dbReference>
<dbReference type="PROSITE" id="PS00789">
    <property type="entry name" value="CHORISMATE_SYNTHASE_3"/>
    <property type="match status" value="1"/>
</dbReference>
<gene>
    <name type="ORF">SPCC1223.14</name>
    <name type="ORF">SPCC297.01</name>
</gene>
<organism>
    <name type="scientific">Schizosaccharomyces pombe (strain 972 / ATCC 24843)</name>
    <name type="common">Fission yeast</name>
    <dbReference type="NCBI Taxonomy" id="284812"/>
    <lineage>
        <taxon>Eukaryota</taxon>
        <taxon>Fungi</taxon>
        <taxon>Dikarya</taxon>
        <taxon>Ascomycota</taxon>
        <taxon>Taphrinomycotina</taxon>
        <taxon>Schizosaccharomycetes</taxon>
        <taxon>Schizosaccharomycetales</taxon>
        <taxon>Schizosaccharomycetaceae</taxon>
        <taxon>Schizosaccharomyces</taxon>
    </lineage>
</organism>
<feature type="chain" id="PRO_0000140703" description="Chorismate synthase">
    <location>
        <begin position="1"/>
        <end position="395"/>
    </location>
</feature>
<reference key="1">
    <citation type="journal article" date="2002" name="Nature">
        <title>The genome sequence of Schizosaccharomyces pombe.</title>
        <authorList>
            <person name="Wood V."/>
            <person name="Gwilliam R."/>
            <person name="Rajandream M.A."/>
            <person name="Lyne M.H."/>
            <person name="Lyne R."/>
            <person name="Stewart A."/>
            <person name="Sgouros J.G."/>
            <person name="Peat N."/>
            <person name="Hayles J."/>
            <person name="Baker S.G."/>
            <person name="Basham D."/>
            <person name="Bowman S."/>
            <person name="Brooks K."/>
            <person name="Brown D."/>
            <person name="Brown S."/>
            <person name="Chillingworth T."/>
            <person name="Churcher C.M."/>
            <person name="Collins M."/>
            <person name="Connor R."/>
            <person name="Cronin A."/>
            <person name="Davis P."/>
            <person name="Feltwell T."/>
            <person name="Fraser A."/>
            <person name="Gentles S."/>
            <person name="Goble A."/>
            <person name="Hamlin N."/>
            <person name="Harris D.E."/>
            <person name="Hidalgo J."/>
            <person name="Hodgson G."/>
            <person name="Holroyd S."/>
            <person name="Hornsby T."/>
            <person name="Howarth S."/>
            <person name="Huckle E.J."/>
            <person name="Hunt S."/>
            <person name="Jagels K."/>
            <person name="James K.D."/>
            <person name="Jones L."/>
            <person name="Jones M."/>
            <person name="Leather S."/>
            <person name="McDonald S."/>
            <person name="McLean J."/>
            <person name="Mooney P."/>
            <person name="Moule S."/>
            <person name="Mungall K.L."/>
            <person name="Murphy L.D."/>
            <person name="Niblett D."/>
            <person name="Odell C."/>
            <person name="Oliver K."/>
            <person name="O'Neil S."/>
            <person name="Pearson D."/>
            <person name="Quail M.A."/>
            <person name="Rabbinowitsch E."/>
            <person name="Rutherford K.M."/>
            <person name="Rutter S."/>
            <person name="Saunders D."/>
            <person name="Seeger K."/>
            <person name="Sharp S."/>
            <person name="Skelton J."/>
            <person name="Simmonds M.N."/>
            <person name="Squares R."/>
            <person name="Squares S."/>
            <person name="Stevens K."/>
            <person name="Taylor K."/>
            <person name="Taylor R.G."/>
            <person name="Tivey A."/>
            <person name="Walsh S.V."/>
            <person name="Warren T."/>
            <person name="Whitehead S."/>
            <person name="Woodward J.R."/>
            <person name="Volckaert G."/>
            <person name="Aert R."/>
            <person name="Robben J."/>
            <person name="Grymonprez B."/>
            <person name="Weltjens I."/>
            <person name="Vanstreels E."/>
            <person name="Rieger M."/>
            <person name="Schaefer M."/>
            <person name="Mueller-Auer S."/>
            <person name="Gabel C."/>
            <person name="Fuchs M."/>
            <person name="Duesterhoeft A."/>
            <person name="Fritzc C."/>
            <person name="Holzer E."/>
            <person name="Moestl D."/>
            <person name="Hilbert H."/>
            <person name="Borzym K."/>
            <person name="Langer I."/>
            <person name="Beck A."/>
            <person name="Lehrach H."/>
            <person name="Reinhardt R."/>
            <person name="Pohl T.M."/>
            <person name="Eger P."/>
            <person name="Zimmermann W."/>
            <person name="Wedler H."/>
            <person name="Wambutt R."/>
            <person name="Purnelle B."/>
            <person name="Goffeau A."/>
            <person name="Cadieu E."/>
            <person name="Dreano S."/>
            <person name="Gloux S."/>
            <person name="Lelaure V."/>
            <person name="Mottier S."/>
            <person name="Galibert F."/>
            <person name="Aves S.J."/>
            <person name="Xiang Z."/>
            <person name="Hunt C."/>
            <person name="Moore K."/>
            <person name="Hurst S.M."/>
            <person name="Lucas M."/>
            <person name="Rochet M."/>
            <person name="Gaillardin C."/>
            <person name="Tallada V.A."/>
            <person name="Garzon A."/>
            <person name="Thode G."/>
            <person name="Daga R.R."/>
            <person name="Cruzado L."/>
            <person name="Jimenez J."/>
            <person name="Sanchez M."/>
            <person name="del Rey F."/>
            <person name="Benito J."/>
            <person name="Dominguez A."/>
            <person name="Revuelta J.L."/>
            <person name="Moreno S."/>
            <person name="Armstrong J."/>
            <person name="Forsburg S.L."/>
            <person name="Cerutti L."/>
            <person name="Lowe T."/>
            <person name="McCombie W.R."/>
            <person name="Paulsen I."/>
            <person name="Potashkin J."/>
            <person name="Shpakovski G.V."/>
            <person name="Ussery D."/>
            <person name="Barrell B.G."/>
            <person name="Nurse P."/>
        </authorList>
    </citation>
    <scope>NUCLEOTIDE SEQUENCE [LARGE SCALE GENOMIC DNA]</scope>
    <source>
        <strain>972 / ATCC 24843</strain>
    </source>
</reference>